<proteinExistence type="inferred from homology"/>
<gene>
    <name type="ordered locus">MPN_439</name>
    <name type="ORF">H08_orf237</name>
    <name type="ORF">MP402</name>
</gene>
<reference key="1">
    <citation type="journal article" date="1996" name="Nucleic Acids Res.">
        <title>Complete sequence analysis of the genome of the bacterium Mycoplasma pneumoniae.</title>
        <authorList>
            <person name="Himmelreich R."/>
            <person name="Hilbert H."/>
            <person name="Plagens H."/>
            <person name="Pirkl E."/>
            <person name="Li B.-C."/>
            <person name="Herrmann R."/>
        </authorList>
    </citation>
    <scope>NUCLEOTIDE SEQUENCE [LARGE SCALE GENOMIC DNA]</scope>
    <source>
        <strain>ATCC 29342 / M129 / Subtype 1</strain>
    </source>
</reference>
<sequence>MKSFLRKPKFWLLLLGGLSTSSIILSACATPSNSALQAVFKPTSNQFFNGEHGTIQSALNTALRDPETNKKFVAAPLLKALEAWYENNQDKNITQFLKDTKTNVDNQYKTVVDKVVSAPRNKSLFVQQDLLDSSGGSEATWKARKLFEQLISDFASRVFQKNYLSYKENGKVSAGPFLYDTISKNSNWQNIVFDAVNFPETNDDFFAKIQSEVFDQWAEYTDPTIISSVTLKYSAPN</sequence>
<organism>
    <name type="scientific">Mycoplasma pneumoniae (strain ATCC 29342 / M129 / Subtype 1)</name>
    <name type="common">Mycoplasmoides pneumoniae</name>
    <dbReference type="NCBI Taxonomy" id="272634"/>
    <lineage>
        <taxon>Bacteria</taxon>
        <taxon>Bacillati</taxon>
        <taxon>Mycoplasmatota</taxon>
        <taxon>Mycoplasmoidales</taxon>
        <taxon>Mycoplasmoidaceae</taxon>
        <taxon>Mycoplasmoides</taxon>
    </lineage>
</organism>
<name>Y439_MYCPN</name>
<dbReference type="EMBL" id="U00089">
    <property type="protein sequence ID" value="AAB96050.1"/>
    <property type="molecule type" value="Genomic_DNA"/>
</dbReference>
<dbReference type="PIR" id="S73728">
    <property type="entry name" value="S73728"/>
</dbReference>
<dbReference type="STRING" id="272634.MPN_439"/>
<dbReference type="EnsemblBacteria" id="AAB96050">
    <property type="protein sequence ID" value="AAB96050"/>
    <property type="gene ID" value="MPN_439"/>
</dbReference>
<dbReference type="KEGG" id="mpn:MPN_439"/>
<dbReference type="HOGENOM" id="CLU_1011296_0_0_14"/>
<dbReference type="Proteomes" id="UP000000808">
    <property type="component" value="Chromosome"/>
</dbReference>
<dbReference type="GO" id="GO:0098552">
    <property type="term" value="C:side of membrane"/>
    <property type="evidence" value="ECO:0007669"/>
    <property type="project" value="UniProtKB-KW"/>
</dbReference>
<dbReference type="InterPro" id="IPR022186">
    <property type="entry name" value="DUF3713"/>
</dbReference>
<dbReference type="Pfam" id="PF12506">
    <property type="entry name" value="DUF3713"/>
    <property type="match status" value="1"/>
</dbReference>
<dbReference type="PROSITE" id="PS51257">
    <property type="entry name" value="PROKAR_LIPOPROTEIN"/>
    <property type="match status" value="1"/>
</dbReference>
<evidence type="ECO:0000255" key="1">
    <source>
        <dbReference type="PROSITE-ProRule" id="PRU00303"/>
    </source>
</evidence>
<evidence type="ECO:0000305" key="2"/>
<keyword id="KW-0325">Glycoprotein</keyword>
<keyword id="KW-0336">GPI-anchor</keyword>
<keyword id="KW-0449">Lipoprotein</keyword>
<keyword id="KW-0472">Membrane</keyword>
<keyword id="KW-0564">Palmitate</keyword>
<keyword id="KW-1185">Reference proteome</keyword>
<keyword id="KW-0732">Signal</keyword>
<protein>
    <recommendedName>
        <fullName>Uncharacterized lipoprotein MPN_439</fullName>
    </recommendedName>
</protein>
<feature type="signal peptide" evidence="1">
    <location>
        <begin position="1"/>
        <end position="27"/>
    </location>
</feature>
<feature type="chain" id="PRO_0000014059" description="Uncharacterized lipoprotein MPN_439">
    <location>
        <begin position="28"/>
        <end position="237"/>
    </location>
</feature>
<feature type="lipid moiety-binding region" description="N-palmitoyl cysteine" evidence="1">
    <location>
        <position position="28"/>
    </location>
</feature>
<feature type="lipid moiety-binding region" description="S-diacylglycerol cysteine" evidence="1">
    <location>
        <position position="28"/>
    </location>
</feature>
<accession>P75339</accession>
<comment type="subcellular location">
    <subcellularLocation>
        <location evidence="2">Membrane</location>
        <topology evidence="2">Lipid-anchor</topology>
        <topology evidence="2">GPI-anchor</topology>
    </subcellularLocation>
</comment>
<comment type="similarity">
    <text evidence="2">Belongs to the MG307/MG309/MG338 family.</text>
</comment>